<sequence>MAKLLYIKANPKSNQSSRTFIISEHFIKVYKEFHPNDQIITLDLYKEGIHFLSQEDINDIFAPKTEASKHHHILKYAYQFAEADKYVFAAPMWNLGIPAILKAYIDYITVSGITFKYTEQGAVGLLRGKKAVHIMATGGEYKTLPFSDFEMANRYLKTILGFMGVEDFKTITAQRLDIVGEDVEKIMFTALKEAEEIAKGF</sequence>
<reference key="1">
    <citation type="submission" date="2009-01" db="EMBL/GenBank/DDBJ databases">
        <title>Complete sequence of chromosome of Caldicellulosiruptor becscii DSM 6725.</title>
        <authorList>
            <person name="Lucas S."/>
            <person name="Copeland A."/>
            <person name="Lapidus A."/>
            <person name="Glavina del Rio T."/>
            <person name="Tice H."/>
            <person name="Bruce D."/>
            <person name="Goodwin L."/>
            <person name="Pitluck S."/>
            <person name="Sims D."/>
            <person name="Meincke L."/>
            <person name="Brettin T."/>
            <person name="Detter J.C."/>
            <person name="Han C."/>
            <person name="Larimer F."/>
            <person name="Land M."/>
            <person name="Hauser L."/>
            <person name="Kyrpides N."/>
            <person name="Ovchinnikova G."/>
            <person name="Kataeva I."/>
            <person name="Adams M.W.W."/>
        </authorList>
    </citation>
    <scope>NUCLEOTIDE SEQUENCE [LARGE SCALE GENOMIC DNA]</scope>
    <source>
        <strain>ATCC BAA-1888 / DSM 6725 / KCTC 15123 / Z-1320</strain>
    </source>
</reference>
<comment type="function">
    <text evidence="1">Quinone reductase that provides resistance to thiol-specific stress caused by electrophilic quinones.</text>
</comment>
<comment type="function">
    <text evidence="1">Also exhibits azoreductase activity. Catalyzes the reductive cleavage of the azo bond in aromatic azo compounds to the corresponding amines.</text>
</comment>
<comment type="catalytic activity">
    <reaction evidence="1">
        <text>2 a quinone + NADH + H(+) = 2 a 1,4-benzosemiquinone + NAD(+)</text>
        <dbReference type="Rhea" id="RHEA:65952"/>
        <dbReference type="ChEBI" id="CHEBI:15378"/>
        <dbReference type="ChEBI" id="CHEBI:57540"/>
        <dbReference type="ChEBI" id="CHEBI:57945"/>
        <dbReference type="ChEBI" id="CHEBI:132124"/>
        <dbReference type="ChEBI" id="CHEBI:134225"/>
    </reaction>
</comment>
<comment type="catalytic activity">
    <reaction evidence="1">
        <text>N,N-dimethyl-1,4-phenylenediamine + anthranilate + 2 NAD(+) = 2-(4-dimethylaminophenyl)diazenylbenzoate + 2 NADH + 2 H(+)</text>
        <dbReference type="Rhea" id="RHEA:55872"/>
        <dbReference type="ChEBI" id="CHEBI:15378"/>
        <dbReference type="ChEBI" id="CHEBI:15783"/>
        <dbReference type="ChEBI" id="CHEBI:16567"/>
        <dbReference type="ChEBI" id="CHEBI:57540"/>
        <dbReference type="ChEBI" id="CHEBI:57945"/>
        <dbReference type="ChEBI" id="CHEBI:71579"/>
        <dbReference type="EC" id="1.7.1.17"/>
    </reaction>
</comment>
<comment type="cofactor">
    <cofactor evidence="1">
        <name>FMN</name>
        <dbReference type="ChEBI" id="CHEBI:58210"/>
    </cofactor>
    <text evidence="1">Binds 1 FMN per subunit.</text>
</comment>
<comment type="subunit">
    <text evidence="1">Homodimer.</text>
</comment>
<comment type="similarity">
    <text evidence="1">Belongs to the azoreductase type 1 family.</text>
</comment>
<protein>
    <recommendedName>
        <fullName evidence="1">FMN-dependent NADH:quinone oxidoreductase</fullName>
        <ecNumber evidence="1">1.6.5.-</ecNumber>
    </recommendedName>
    <alternativeName>
        <fullName evidence="1">Azo-dye reductase</fullName>
    </alternativeName>
    <alternativeName>
        <fullName evidence="1">FMN-dependent NADH-azo compound oxidoreductase</fullName>
    </alternativeName>
    <alternativeName>
        <fullName evidence="1">FMN-dependent NADH-azoreductase</fullName>
        <ecNumber evidence="1">1.7.1.17</ecNumber>
    </alternativeName>
</protein>
<gene>
    <name evidence="1" type="primary">azoR</name>
    <name type="ordered locus">Athe_0927</name>
</gene>
<keyword id="KW-0285">Flavoprotein</keyword>
<keyword id="KW-0288">FMN</keyword>
<keyword id="KW-0520">NAD</keyword>
<keyword id="KW-0560">Oxidoreductase</keyword>
<name>AZOR_CALBD</name>
<feature type="chain" id="PRO_1000164753" description="FMN-dependent NADH:quinone oxidoreductase">
    <location>
        <begin position="1"/>
        <end position="201"/>
    </location>
</feature>
<feature type="binding site" evidence="1">
    <location>
        <begin position="92"/>
        <end position="95"/>
    </location>
    <ligand>
        <name>FMN</name>
        <dbReference type="ChEBI" id="CHEBI:58210"/>
    </ligand>
</feature>
<evidence type="ECO:0000255" key="1">
    <source>
        <dbReference type="HAMAP-Rule" id="MF_01216"/>
    </source>
</evidence>
<proteinExistence type="inferred from homology"/>
<dbReference type="EC" id="1.6.5.-" evidence="1"/>
<dbReference type="EC" id="1.7.1.17" evidence="1"/>
<dbReference type="EMBL" id="CP001393">
    <property type="protein sequence ID" value="ACM60032.1"/>
    <property type="molecule type" value="Genomic_DNA"/>
</dbReference>
<dbReference type="RefSeq" id="WP_015907456.1">
    <property type="nucleotide sequence ID" value="NC_012034.1"/>
</dbReference>
<dbReference type="SMR" id="B9MQS8"/>
<dbReference type="STRING" id="521460.Athe_0927"/>
<dbReference type="GeneID" id="31772281"/>
<dbReference type="KEGG" id="ate:Athe_0927"/>
<dbReference type="eggNOG" id="COG1182">
    <property type="taxonomic scope" value="Bacteria"/>
</dbReference>
<dbReference type="HOGENOM" id="CLU_088964_3_1_9"/>
<dbReference type="Proteomes" id="UP000007723">
    <property type="component" value="Chromosome"/>
</dbReference>
<dbReference type="GO" id="GO:0009055">
    <property type="term" value="F:electron transfer activity"/>
    <property type="evidence" value="ECO:0007669"/>
    <property type="project" value="UniProtKB-UniRule"/>
</dbReference>
<dbReference type="GO" id="GO:0010181">
    <property type="term" value="F:FMN binding"/>
    <property type="evidence" value="ECO:0007669"/>
    <property type="project" value="UniProtKB-UniRule"/>
</dbReference>
<dbReference type="GO" id="GO:0016652">
    <property type="term" value="F:oxidoreductase activity, acting on NAD(P)H as acceptor"/>
    <property type="evidence" value="ECO:0007669"/>
    <property type="project" value="UniProtKB-UniRule"/>
</dbReference>
<dbReference type="GO" id="GO:0016655">
    <property type="term" value="F:oxidoreductase activity, acting on NAD(P)H, quinone or similar compound as acceptor"/>
    <property type="evidence" value="ECO:0007669"/>
    <property type="project" value="InterPro"/>
</dbReference>
<dbReference type="Gene3D" id="3.40.50.360">
    <property type="match status" value="1"/>
</dbReference>
<dbReference type="HAMAP" id="MF_01216">
    <property type="entry name" value="Azoreductase_type1"/>
    <property type="match status" value="1"/>
</dbReference>
<dbReference type="InterPro" id="IPR003680">
    <property type="entry name" value="Flavodoxin_fold"/>
</dbReference>
<dbReference type="InterPro" id="IPR029039">
    <property type="entry name" value="Flavoprotein-like_sf"/>
</dbReference>
<dbReference type="InterPro" id="IPR050104">
    <property type="entry name" value="FMN-dep_NADH:Q_OxRdtase_AzoR1"/>
</dbReference>
<dbReference type="InterPro" id="IPR023048">
    <property type="entry name" value="NADH:quinone_OxRdtase_FMN_depd"/>
</dbReference>
<dbReference type="PANTHER" id="PTHR43741">
    <property type="entry name" value="FMN-DEPENDENT NADH-AZOREDUCTASE 1"/>
    <property type="match status" value="1"/>
</dbReference>
<dbReference type="PANTHER" id="PTHR43741:SF7">
    <property type="entry name" value="FMN-DEPENDENT NADH:QUINONE OXIDOREDUCTASE"/>
    <property type="match status" value="1"/>
</dbReference>
<dbReference type="Pfam" id="PF02525">
    <property type="entry name" value="Flavodoxin_2"/>
    <property type="match status" value="1"/>
</dbReference>
<dbReference type="SUPFAM" id="SSF52218">
    <property type="entry name" value="Flavoproteins"/>
    <property type="match status" value="1"/>
</dbReference>
<accession>B9MQS8</accession>
<organism>
    <name type="scientific">Caldicellulosiruptor bescii (strain ATCC BAA-1888 / DSM 6725 / KCTC 15123 / Z-1320)</name>
    <name type="common">Anaerocellum thermophilum</name>
    <dbReference type="NCBI Taxonomy" id="521460"/>
    <lineage>
        <taxon>Bacteria</taxon>
        <taxon>Bacillati</taxon>
        <taxon>Bacillota</taxon>
        <taxon>Bacillota incertae sedis</taxon>
        <taxon>Caldicellulosiruptorales</taxon>
        <taxon>Caldicellulosiruptoraceae</taxon>
        <taxon>Caldicellulosiruptor</taxon>
    </lineage>
</organism>